<proteinExistence type="inferred from homology"/>
<comment type="function">
    <text evidence="1">Catalyzes the transfer of a phosphate group to glutamate to form L-glutamate 5-phosphate.</text>
</comment>
<comment type="catalytic activity">
    <reaction evidence="1">
        <text>L-glutamate + ATP = L-glutamyl 5-phosphate + ADP</text>
        <dbReference type="Rhea" id="RHEA:14877"/>
        <dbReference type="ChEBI" id="CHEBI:29985"/>
        <dbReference type="ChEBI" id="CHEBI:30616"/>
        <dbReference type="ChEBI" id="CHEBI:58274"/>
        <dbReference type="ChEBI" id="CHEBI:456216"/>
        <dbReference type="EC" id="2.7.2.11"/>
    </reaction>
</comment>
<comment type="pathway">
    <text evidence="1">Amino-acid biosynthesis; L-proline biosynthesis; L-glutamate 5-semialdehyde from L-glutamate: step 1/2.</text>
</comment>
<comment type="subcellular location">
    <subcellularLocation>
        <location evidence="1">Cytoplasm</location>
    </subcellularLocation>
</comment>
<comment type="similarity">
    <text evidence="1">Belongs to the glutamate 5-kinase family.</text>
</comment>
<gene>
    <name evidence="1" type="primary">proB</name>
    <name type="ordered locus">DIP1777</name>
</gene>
<reference key="1">
    <citation type="journal article" date="2003" name="Nucleic Acids Res.">
        <title>The complete genome sequence and analysis of Corynebacterium diphtheriae NCTC13129.</title>
        <authorList>
            <person name="Cerdeno-Tarraga A.-M."/>
            <person name="Efstratiou A."/>
            <person name="Dover L.G."/>
            <person name="Holden M.T.G."/>
            <person name="Pallen M.J."/>
            <person name="Bentley S.D."/>
            <person name="Besra G.S."/>
            <person name="Churcher C.M."/>
            <person name="James K.D."/>
            <person name="De Zoysa A."/>
            <person name="Chillingworth T."/>
            <person name="Cronin A."/>
            <person name="Dowd L."/>
            <person name="Feltwell T."/>
            <person name="Hamlin N."/>
            <person name="Holroyd S."/>
            <person name="Jagels K."/>
            <person name="Moule S."/>
            <person name="Quail M.A."/>
            <person name="Rabbinowitsch E."/>
            <person name="Rutherford K.M."/>
            <person name="Thomson N.R."/>
            <person name="Unwin L."/>
            <person name="Whitehead S."/>
            <person name="Barrell B.G."/>
            <person name="Parkhill J."/>
        </authorList>
    </citation>
    <scope>NUCLEOTIDE SEQUENCE [LARGE SCALE GENOMIC DNA]</scope>
    <source>
        <strain>ATCC 700971 / NCTC 13129 / Biotype gravis</strain>
    </source>
</reference>
<evidence type="ECO:0000255" key="1">
    <source>
        <dbReference type="HAMAP-Rule" id="MF_00456"/>
    </source>
</evidence>
<keyword id="KW-0028">Amino-acid biosynthesis</keyword>
<keyword id="KW-0067">ATP-binding</keyword>
<keyword id="KW-0963">Cytoplasm</keyword>
<keyword id="KW-0418">Kinase</keyword>
<keyword id="KW-0547">Nucleotide-binding</keyword>
<keyword id="KW-0641">Proline biosynthesis</keyword>
<keyword id="KW-1185">Reference proteome</keyword>
<keyword id="KW-0808">Transferase</keyword>
<dbReference type="EC" id="2.7.2.11" evidence="1"/>
<dbReference type="EMBL" id="BX248359">
    <property type="protein sequence ID" value="CAE50307.1"/>
    <property type="molecule type" value="Genomic_DNA"/>
</dbReference>
<dbReference type="RefSeq" id="WP_003852446.1">
    <property type="nucleotide sequence ID" value="NC_002935.2"/>
</dbReference>
<dbReference type="SMR" id="Q6NFV9"/>
<dbReference type="STRING" id="257309.DIP1777"/>
<dbReference type="KEGG" id="cdi:DIP1777"/>
<dbReference type="HOGENOM" id="CLU_025400_2_0_11"/>
<dbReference type="UniPathway" id="UPA00098">
    <property type="reaction ID" value="UER00359"/>
</dbReference>
<dbReference type="Proteomes" id="UP000002198">
    <property type="component" value="Chromosome"/>
</dbReference>
<dbReference type="GO" id="GO:0005829">
    <property type="term" value="C:cytosol"/>
    <property type="evidence" value="ECO:0007669"/>
    <property type="project" value="TreeGrafter"/>
</dbReference>
<dbReference type="GO" id="GO:0005524">
    <property type="term" value="F:ATP binding"/>
    <property type="evidence" value="ECO:0007669"/>
    <property type="project" value="UniProtKB-KW"/>
</dbReference>
<dbReference type="GO" id="GO:0004349">
    <property type="term" value="F:glutamate 5-kinase activity"/>
    <property type="evidence" value="ECO:0007669"/>
    <property type="project" value="UniProtKB-UniRule"/>
</dbReference>
<dbReference type="GO" id="GO:0003723">
    <property type="term" value="F:RNA binding"/>
    <property type="evidence" value="ECO:0007669"/>
    <property type="project" value="InterPro"/>
</dbReference>
<dbReference type="GO" id="GO:0055129">
    <property type="term" value="P:L-proline biosynthetic process"/>
    <property type="evidence" value="ECO:0007669"/>
    <property type="project" value="UniProtKB-UniRule"/>
</dbReference>
<dbReference type="CDD" id="cd04242">
    <property type="entry name" value="AAK_G5K_ProB"/>
    <property type="match status" value="1"/>
</dbReference>
<dbReference type="CDD" id="cd21157">
    <property type="entry name" value="PUA_G5K"/>
    <property type="match status" value="1"/>
</dbReference>
<dbReference type="FunFam" id="3.40.1160.10:FF:000018">
    <property type="entry name" value="Glutamate 5-kinase"/>
    <property type="match status" value="1"/>
</dbReference>
<dbReference type="Gene3D" id="3.40.1160.10">
    <property type="entry name" value="Acetylglutamate kinase-like"/>
    <property type="match status" value="1"/>
</dbReference>
<dbReference type="Gene3D" id="2.30.130.10">
    <property type="entry name" value="PUA domain"/>
    <property type="match status" value="1"/>
</dbReference>
<dbReference type="HAMAP" id="MF_00456">
    <property type="entry name" value="ProB"/>
    <property type="match status" value="1"/>
</dbReference>
<dbReference type="InterPro" id="IPR036393">
    <property type="entry name" value="AceGlu_kinase-like_sf"/>
</dbReference>
<dbReference type="InterPro" id="IPR001048">
    <property type="entry name" value="Asp/Glu/Uridylate_kinase"/>
</dbReference>
<dbReference type="InterPro" id="IPR041739">
    <property type="entry name" value="G5K_ProB"/>
</dbReference>
<dbReference type="InterPro" id="IPR001057">
    <property type="entry name" value="Glu/AcGlu_kinase"/>
</dbReference>
<dbReference type="InterPro" id="IPR011529">
    <property type="entry name" value="Glu_5kinase"/>
</dbReference>
<dbReference type="InterPro" id="IPR005715">
    <property type="entry name" value="Glu_5kinase/COase_Synthase"/>
</dbReference>
<dbReference type="InterPro" id="IPR019797">
    <property type="entry name" value="Glutamate_5-kinase_CS"/>
</dbReference>
<dbReference type="InterPro" id="IPR002478">
    <property type="entry name" value="PUA"/>
</dbReference>
<dbReference type="InterPro" id="IPR015947">
    <property type="entry name" value="PUA-like_sf"/>
</dbReference>
<dbReference type="InterPro" id="IPR036974">
    <property type="entry name" value="PUA_sf"/>
</dbReference>
<dbReference type="NCBIfam" id="TIGR01027">
    <property type="entry name" value="proB"/>
    <property type="match status" value="1"/>
</dbReference>
<dbReference type="PANTHER" id="PTHR43654">
    <property type="entry name" value="GLUTAMATE 5-KINASE"/>
    <property type="match status" value="1"/>
</dbReference>
<dbReference type="PANTHER" id="PTHR43654:SF1">
    <property type="entry name" value="ISOPENTENYL PHOSPHATE KINASE"/>
    <property type="match status" value="1"/>
</dbReference>
<dbReference type="Pfam" id="PF00696">
    <property type="entry name" value="AA_kinase"/>
    <property type="match status" value="1"/>
</dbReference>
<dbReference type="Pfam" id="PF01472">
    <property type="entry name" value="PUA"/>
    <property type="match status" value="1"/>
</dbReference>
<dbReference type="PIRSF" id="PIRSF000729">
    <property type="entry name" value="GK"/>
    <property type="match status" value="1"/>
</dbReference>
<dbReference type="PRINTS" id="PR00474">
    <property type="entry name" value="GLU5KINASE"/>
</dbReference>
<dbReference type="SMART" id="SM00359">
    <property type="entry name" value="PUA"/>
    <property type="match status" value="1"/>
</dbReference>
<dbReference type="SUPFAM" id="SSF53633">
    <property type="entry name" value="Carbamate kinase-like"/>
    <property type="match status" value="1"/>
</dbReference>
<dbReference type="SUPFAM" id="SSF88697">
    <property type="entry name" value="PUA domain-like"/>
    <property type="match status" value="1"/>
</dbReference>
<dbReference type="PROSITE" id="PS00902">
    <property type="entry name" value="GLUTAMATE_5_KINASE"/>
    <property type="match status" value="1"/>
</dbReference>
<dbReference type="PROSITE" id="PS50890">
    <property type="entry name" value="PUA"/>
    <property type="match status" value="1"/>
</dbReference>
<sequence>MNAQHSSADLRDVIRNAKRIVVKIGSSSLTGENFEVSPGRIDRIVEALEDRMHRGSDVIVVSSGAVAAGMAPLGLTSRPKDLATKQAAASVGQVHLANAWGNSFARYNRTIGQVLLTASDAGQRDRARNAQRTIDRLRLLHAVPIINENDTVATSEMHFGDNDRLAAIVSHLVSADALVLLSDVDGLYDKNPADPSARFVSEVRDGNDLKGVIAGDGGAVGTGGMASKVSAARLASRSGVPVLLTSADYVAEALGDAEVGTVFYPKDDRLSAWKFWALYAADTGGALRIDAGAVAAVTAGGNSLLAVGITEVIGDFHAGEIVEILGPEGEIIGRGEVAYDSAVLITMLGKQTAQLPEGLQRPVVHADYLSDYASRA</sequence>
<accession>Q6NFV9</accession>
<feature type="chain" id="PRO_0000109663" description="Glutamate 5-kinase">
    <location>
        <begin position="1"/>
        <end position="376"/>
    </location>
</feature>
<feature type="domain" description="PUA" evidence="1">
    <location>
        <begin position="284"/>
        <end position="358"/>
    </location>
</feature>
<feature type="binding site" evidence="1">
    <location>
        <position position="23"/>
    </location>
    <ligand>
        <name>ATP</name>
        <dbReference type="ChEBI" id="CHEBI:30616"/>
    </ligand>
</feature>
<feature type="binding site" evidence="1">
    <location>
        <position position="63"/>
    </location>
    <ligand>
        <name>substrate</name>
    </ligand>
</feature>
<feature type="binding site" evidence="1">
    <location>
        <position position="150"/>
    </location>
    <ligand>
        <name>substrate</name>
    </ligand>
</feature>
<feature type="binding site" evidence="1">
    <location>
        <position position="162"/>
    </location>
    <ligand>
        <name>substrate</name>
    </ligand>
</feature>
<feature type="binding site" evidence="1">
    <location>
        <begin position="182"/>
        <end position="183"/>
    </location>
    <ligand>
        <name>ATP</name>
        <dbReference type="ChEBI" id="CHEBI:30616"/>
    </ligand>
</feature>
<feature type="binding site" evidence="1">
    <location>
        <begin position="222"/>
        <end position="228"/>
    </location>
    <ligand>
        <name>ATP</name>
        <dbReference type="ChEBI" id="CHEBI:30616"/>
    </ligand>
</feature>
<organism>
    <name type="scientific">Corynebacterium diphtheriae (strain ATCC 700971 / NCTC 13129 / Biotype gravis)</name>
    <dbReference type="NCBI Taxonomy" id="257309"/>
    <lineage>
        <taxon>Bacteria</taxon>
        <taxon>Bacillati</taxon>
        <taxon>Actinomycetota</taxon>
        <taxon>Actinomycetes</taxon>
        <taxon>Mycobacteriales</taxon>
        <taxon>Corynebacteriaceae</taxon>
        <taxon>Corynebacterium</taxon>
    </lineage>
</organism>
<name>PROB_CORDI</name>
<protein>
    <recommendedName>
        <fullName evidence="1">Glutamate 5-kinase</fullName>
        <ecNumber evidence="1">2.7.2.11</ecNumber>
    </recommendedName>
    <alternativeName>
        <fullName evidence="1">Gamma-glutamyl kinase</fullName>
        <shortName evidence="1">GK</shortName>
    </alternativeName>
</protein>